<sequence length="485" mass="52303">MSLFDHSVSELHKKLNNKEISVTDLVEESYKRIADVEDNVKAFLTLDEENARAKAKELDAKIGAEDNGLLFGMPIGVKDNIVTNGLRTTCASKILANFDPIYDATVVQKLKAADTITIGKLNMDEFAMGSSNENSGFYATKNPWNLDYVPGGSSGGSAAAVAAGEVLFSLGSDTGGSIRQPAAYCGVVGLKPTYGRVSRYGLVAFASSLDQIGPITRTVEDNAYLLQAISGLDRMDATSANVEVGNYLAGLTGDVKGLRIAVPKEYLGEGVGEEARESVLAALKVLEGMGATWEEVSLPHSKYALATYYLLSSSEASANLSRFDGVRYGVRSDNVNNLLDLYKNTRSEGFGDEVKRRIMLGTFALSSGYYDAYYKKAQQVRTLIKNDFENVFANYDVIIGPTTPTPAFKVGEKVDDPMTMYANDILTIPVNLAGVPAISVPCGFGANNMPLGLQIIGKHFDEATIYRVAHAFEQATDYHTKKASL</sequence>
<accession>C1EV88</accession>
<comment type="function">
    <text evidence="1">Allows the formation of correctly charged Gln-tRNA(Gln) through the transamidation of misacylated Glu-tRNA(Gln) in organisms which lack glutaminyl-tRNA synthetase. The reaction takes place in the presence of glutamine and ATP through an activated gamma-phospho-Glu-tRNA(Gln).</text>
</comment>
<comment type="catalytic activity">
    <reaction evidence="1">
        <text>L-glutamyl-tRNA(Gln) + L-glutamine + ATP + H2O = L-glutaminyl-tRNA(Gln) + L-glutamate + ADP + phosphate + H(+)</text>
        <dbReference type="Rhea" id="RHEA:17521"/>
        <dbReference type="Rhea" id="RHEA-COMP:9681"/>
        <dbReference type="Rhea" id="RHEA-COMP:9684"/>
        <dbReference type="ChEBI" id="CHEBI:15377"/>
        <dbReference type="ChEBI" id="CHEBI:15378"/>
        <dbReference type="ChEBI" id="CHEBI:29985"/>
        <dbReference type="ChEBI" id="CHEBI:30616"/>
        <dbReference type="ChEBI" id="CHEBI:43474"/>
        <dbReference type="ChEBI" id="CHEBI:58359"/>
        <dbReference type="ChEBI" id="CHEBI:78520"/>
        <dbReference type="ChEBI" id="CHEBI:78521"/>
        <dbReference type="ChEBI" id="CHEBI:456216"/>
        <dbReference type="EC" id="6.3.5.7"/>
    </reaction>
</comment>
<comment type="subunit">
    <text evidence="1">Heterotrimer of A, B and C subunits.</text>
</comment>
<comment type="similarity">
    <text evidence="1">Belongs to the amidase family. GatA subfamily.</text>
</comment>
<dbReference type="EC" id="6.3.5.7" evidence="1"/>
<dbReference type="EMBL" id="CP001407">
    <property type="protein sequence ID" value="ACO29178.1"/>
    <property type="molecule type" value="Genomic_DNA"/>
</dbReference>
<dbReference type="RefSeq" id="WP_000051434.1">
    <property type="nucleotide sequence ID" value="NZ_CP009318.1"/>
</dbReference>
<dbReference type="SMR" id="C1EV88"/>
<dbReference type="KEGG" id="bcx:BCA_0394"/>
<dbReference type="PATRIC" id="fig|572264.18.peg.383"/>
<dbReference type="Proteomes" id="UP000002210">
    <property type="component" value="Chromosome"/>
</dbReference>
<dbReference type="GO" id="GO:0030956">
    <property type="term" value="C:glutamyl-tRNA(Gln) amidotransferase complex"/>
    <property type="evidence" value="ECO:0007669"/>
    <property type="project" value="InterPro"/>
</dbReference>
<dbReference type="GO" id="GO:0005524">
    <property type="term" value="F:ATP binding"/>
    <property type="evidence" value="ECO:0007669"/>
    <property type="project" value="UniProtKB-KW"/>
</dbReference>
<dbReference type="GO" id="GO:0050567">
    <property type="term" value="F:glutaminyl-tRNA synthase (glutamine-hydrolyzing) activity"/>
    <property type="evidence" value="ECO:0007669"/>
    <property type="project" value="UniProtKB-UniRule"/>
</dbReference>
<dbReference type="GO" id="GO:0006412">
    <property type="term" value="P:translation"/>
    <property type="evidence" value="ECO:0007669"/>
    <property type="project" value="UniProtKB-UniRule"/>
</dbReference>
<dbReference type="Gene3D" id="3.90.1300.10">
    <property type="entry name" value="Amidase signature (AS) domain"/>
    <property type="match status" value="1"/>
</dbReference>
<dbReference type="HAMAP" id="MF_00120">
    <property type="entry name" value="GatA"/>
    <property type="match status" value="1"/>
</dbReference>
<dbReference type="InterPro" id="IPR000120">
    <property type="entry name" value="Amidase"/>
</dbReference>
<dbReference type="InterPro" id="IPR020556">
    <property type="entry name" value="Amidase_CS"/>
</dbReference>
<dbReference type="InterPro" id="IPR023631">
    <property type="entry name" value="Amidase_dom"/>
</dbReference>
<dbReference type="InterPro" id="IPR036928">
    <property type="entry name" value="AS_sf"/>
</dbReference>
<dbReference type="InterPro" id="IPR004412">
    <property type="entry name" value="GatA"/>
</dbReference>
<dbReference type="NCBIfam" id="TIGR00132">
    <property type="entry name" value="gatA"/>
    <property type="match status" value="1"/>
</dbReference>
<dbReference type="PANTHER" id="PTHR11895:SF151">
    <property type="entry name" value="GLUTAMYL-TRNA(GLN) AMIDOTRANSFERASE SUBUNIT A"/>
    <property type="match status" value="1"/>
</dbReference>
<dbReference type="PANTHER" id="PTHR11895">
    <property type="entry name" value="TRANSAMIDASE"/>
    <property type="match status" value="1"/>
</dbReference>
<dbReference type="Pfam" id="PF01425">
    <property type="entry name" value="Amidase"/>
    <property type="match status" value="1"/>
</dbReference>
<dbReference type="SUPFAM" id="SSF75304">
    <property type="entry name" value="Amidase signature (AS) enzymes"/>
    <property type="match status" value="1"/>
</dbReference>
<dbReference type="PROSITE" id="PS00571">
    <property type="entry name" value="AMIDASES"/>
    <property type="match status" value="1"/>
</dbReference>
<proteinExistence type="inferred from homology"/>
<evidence type="ECO:0000255" key="1">
    <source>
        <dbReference type="HAMAP-Rule" id="MF_00120"/>
    </source>
</evidence>
<reference key="1">
    <citation type="submission" date="2009-02" db="EMBL/GenBank/DDBJ databases">
        <title>Genome sequence of Bacillus cereus 03BB102.</title>
        <authorList>
            <person name="Dodson R.J."/>
            <person name="Jackson P."/>
            <person name="Munk A.C."/>
            <person name="Brettin T."/>
            <person name="Bruce D."/>
            <person name="Detter C."/>
            <person name="Tapia R."/>
            <person name="Han C."/>
            <person name="Sutton G."/>
            <person name="Sims D."/>
        </authorList>
    </citation>
    <scope>NUCLEOTIDE SEQUENCE [LARGE SCALE GENOMIC DNA]</scope>
    <source>
        <strain>03BB102</strain>
    </source>
</reference>
<organism>
    <name type="scientific">Bacillus cereus (strain 03BB102)</name>
    <dbReference type="NCBI Taxonomy" id="572264"/>
    <lineage>
        <taxon>Bacteria</taxon>
        <taxon>Bacillati</taxon>
        <taxon>Bacillota</taxon>
        <taxon>Bacilli</taxon>
        <taxon>Bacillales</taxon>
        <taxon>Bacillaceae</taxon>
        <taxon>Bacillus</taxon>
        <taxon>Bacillus cereus group</taxon>
    </lineage>
</organism>
<keyword id="KW-0067">ATP-binding</keyword>
<keyword id="KW-0436">Ligase</keyword>
<keyword id="KW-0547">Nucleotide-binding</keyword>
<keyword id="KW-0648">Protein biosynthesis</keyword>
<protein>
    <recommendedName>
        <fullName evidence="1">Glutamyl-tRNA(Gln) amidotransferase subunit A</fullName>
        <shortName evidence="1">Glu-ADT subunit A</shortName>
        <ecNumber evidence="1">6.3.5.7</ecNumber>
    </recommendedName>
</protein>
<name>GATA_BACC3</name>
<gene>
    <name evidence="1" type="primary">gatA</name>
    <name type="ordered locus">BCA_0394</name>
</gene>
<feature type="chain" id="PRO_1000122465" description="Glutamyl-tRNA(Gln) amidotransferase subunit A">
    <location>
        <begin position="1"/>
        <end position="485"/>
    </location>
</feature>
<feature type="active site" description="Charge relay system" evidence="1">
    <location>
        <position position="78"/>
    </location>
</feature>
<feature type="active site" description="Charge relay system" evidence="1">
    <location>
        <position position="153"/>
    </location>
</feature>
<feature type="active site" description="Acyl-ester intermediate" evidence="1">
    <location>
        <position position="177"/>
    </location>
</feature>